<comment type="function">
    <text evidence="1">Part of an ABC transporter complex involved in carbohydrate import. Could be involved in ribose, galactose and/or methyl galactoside import. Responsible for energy coupling to the transport system.</text>
</comment>
<comment type="catalytic activity">
    <reaction evidence="1">
        <text>D-ribose(out) + ATP + H2O = D-ribose(in) + ADP + phosphate + H(+)</text>
        <dbReference type="Rhea" id="RHEA:29903"/>
        <dbReference type="ChEBI" id="CHEBI:15377"/>
        <dbReference type="ChEBI" id="CHEBI:15378"/>
        <dbReference type="ChEBI" id="CHEBI:30616"/>
        <dbReference type="ChEBI" id="CHEBI:43474"/>
        <dbReference type="ChEBI" id="CHEBI:47013"/>
        <dbReference type="ChEBI" id="CHEBI:456216"/>
        <dbReference type="EC" id="7.5.2.7"/>
    </reaction>
</comment>
<comment type="catalytic activity">
    <reaction evidence="1">
        <text>D-galactose(out) + ATP + H2O = D-galactose(in) + ADP + phosphate + H(+)</text>
        <dbReference type="Rhea" id="RHEA:60156"/>
        <dbReference type="ChEBI" id="CHEBI:4139"/>
        <dbReference type="ChEBI" id="CHEBI:15377"/>
        <dbReference type="ChEBI" id="CHEBI:15378"/>
        <dbReference type="ChEBI" id="CHEBI:30616"/>
        <dbReference type="ChEBI" id="CHEBI:43474"/>
        <dbReference type="ChEBI" id="CHEBI:456216"/>
        <dbReference type="EC" id="7.5.2.11"/>
    </reaction>
</comment>
<comment type="subcellular location">
    <subcellularLocation>
        <location evidence="1">Cell inner membrane</location>
        <topology evidence="1">Peripheral membrane protein</topology>
    </subcellularLocation>
</comment>
<comment type="similarity">
    <text evidence="1">Belongs to the ABC transporter superfamily. Carbohydrate importer 2 (CUT2) (TC 3.A.1.2) family.</text>
</comment>
<proteinExistence type="inferred from homology"/>
<protein>
    <recommendedName>
        <fullName evidence="1">Putative ribose/galactose/methyl galactoside import ATP-binding protein 2</fullName>
        <ecNumber evidence="1">7.5.2.11</ecNumber>
        <ecNumber evidence="1">7.5.2.7</ecNumber>
    </recommendedName>
</protein>
<dbReference type="EC" id="7.5.2.11" evidence="1"/>
<dbReference type="EC" id="7.5.2.7" evidence="1"/>
<dbReference type="EMBL" id="CP000151">
    <property type="protein sequence ID" value="ABB08165.1"/>
    <property type="molecule type" value="Genomic_DNA"/>
</dbReference>
<dbReference type="RefSeq" id="WP_011351735.1">
    <property type="nucleotide sequence ID" value="NC_007510.1"/>
</dbReference>
<dbReference type="SMR" id="Q39HA1"/>
<dbReference type="GeneID" id="45094464"/>
<dbReference type="KEGG" id="bur:Bcep18194_A4569"/>
<dbReference type="PATRIC" id="fig|482957.22.peg.1473"/>
<dbReference type="HOGENOM" id="CLU_000604_92_2_4"/>
<dbReference type="Proteomes" id="UP000002705">
    <property type="component" value="Chromosome 1"/>
</dbReference>
<dbReference type="GO" id="GO:0005886">
    <property type="term" value="C:plasma membrane"/>
    <property type="evidence" value="ECO:0007669"/>
    <property type="project" value="UniProtKB-SubCell"/>
</dbReference>
<dbReference type="GO" id="GO:0015611">
    <property type="term" value="F:ABC-type D-ribose transporter activity"/>
    <property type="evidence" value="ECO:0007669"/>
    <property type="project" value="UniProtKB-EC"/>
</dbReference>
<dbReference type="GO" id="GO:0005524">
    <property type="term" value="F:ATP binding"/>
    <property type="evidence" value="ECO:0007669"/>
    <property type="project" value="UniProtKB-KW"/>
</dbReference>
<dbReference type="GO" id="GO:0016887">
    <property type="term" value="F:ATP hydrolysis activity"/>
    <property type="evidence" value="ECO:0007669"/>
    <property type="project" value="InterPro"/>
</dbReference>
<dbReference type="CDD" id="cd03216">
    <property type="entry name" value="ABC_Carb_Monos_I"/>
    <property type="match status" value="1"/>
</dbReference>
<dbReference type="CDD" id="cd03215">
    <property type="entry name" value="ABC_Carb_Monos_II"/>
    <property type="match status" value="1"/>
</dbReference>
<dbReference type="FunFam" id="3.40.50.300:FF:000127">
    <property type="entry name" value="Ribose import ATP-binding protein RbsA"/>
    <property type="match status" value="1"/>
</dbReference>
<dbReference type="Gene3D" id="3.40.50.300">
    <property type="entry name" value="P-loop containing nucleotide triphosphate hydrolases"/>
    <property type="match status" value="2"/>
</dbReference>
<dbReference type="InterPro" id="IPR003593">
    <property type="entry name" value="AAA+_ATPase"/>
</dbReference>
<dbReference type="InterPro" id="IPR050107">
    <property type="entry name" value="ABC_carbohydrate_import_ATPase"/>
</dbReference>
<dbReference type="InterPro" id="IPR003439">
    <property type="entry name" value="ABC_transporter-like_ATP-bd"/>
</dbReference>
<dbReference type="InterPro" id="IPR017871">
    <property type="entry name" value="ABC_transporter-like_CS"/>
</dbReference>
<dbReference type="InterPro" id="IPR027417">
    <property type="entry name" value="P-loop_NTPase"/>
</dbReference>
<dbReference type="PANTHER" id="PTHR43790">
    <property type="entry name" value="CARBOHYDRATE TRANSPORT ATP-BINDING PROTEIN MG119-RELATED"/>
    <property type="match status" value="1"/>
</dbReference>
<dbReference type="PANTHER" id="PTHR43790:SF7">
    <property type="entry name" value="GALACTOSE_METHYL GALACTOSIDE IMPORT ATP-BINDING PROTEIN MGLA"/>
    <property type="match status" value="1"/>
</dbReference>
<dbReference type="Pfam" id="PF00005">
    <property type="entry name" value="ABC_tran"/>
    <property type="match status" value="2"/>
</dbReference>
<dbReference type="SMART" id="SM00382">
    <property type="entry name" value="AAA"/>
    <property type="match status" value="2"/>
</dbReference>
<dbReference type="SUPFAM" id="SSF52540">
    <property type="entry name" value="P-loop containing nucleoside triphosphate hydrolases"/>
    <property type="match status" value="2"/>
</dbReference>
<dbReference type="PROSITE" id="PS00211">
    <property type="entry name" value="ABC_TRANSPORTER_1"/>
    <property type="match status" value="1"/>
</dbReference>
<dbReference type="PROSITE" id="PS50893">
    <property type="entry name" value="ABC_TRANSPORTER_2"/>
    <property type="match status" value="2"/>
</dbReference>
<dbReference type="PROSITE" id="PS51260">
    <property type="entry name" value="MGLA"/>
    <property type="match status" value="1"/>
</dbReference>
<dbReference type="PROSITE" id="PS51254">
    <property type="entry name" value="RBSA"/>
    <property type="match status" value="1"/>
</dbReference>
<gene>
    <name type="ordered locus">Bcep18194_A4569</name>
</gene>
<sequence>MFTARVARPMAGDDAPAASSGSTGSSAPPASSAADCVLEVRGVGKSFPGVVALDGVQFRVRRGTVHALMGENGAGKSTLMKIIAGVYTPDQGEILINGEPVVLNGPLDALDRGIAMIHQELNLMPYMTVAENIWIRREPKNRFGLIDHAALRRQTAELFERLSIDIDPETDVRTLTVASRQMVEIAKAVSFDSDVLIMDEPTSALTDKEVTHLFRIIRQLREQGKGIVYITHKMNELFEIADEFSVFRDGKYIGTHASSDVTRDDIIRMMVGREITQMFPKEEVPIGDVVLSVKNLGVDGVFRDVSFELRAGEILGVAGLVGSGRSNVAEALFGVVPATSGEIRIDGKPVRITTPGQAMKHGMAFLTEDRKDTGCFLNLDLLANMEAAVLSNRYVKFNFVRQAQLKRDCEEMSRMLRVKSPGLHEEIQNLSGGNQQKVLIGRWLLTQPRILILDEPTRGIDVGAKAEIHRLVSALAGKGVAVLMISSEMPEVLGMSDRVMVMHEGRMTGIVDRKDADQVRIMDLASR</sequence>
<keyword id="KW-0067">ATP-binding</keyword>
<keyword id="KW-0997">Cell inner membrane</keyword>
<keyword id="KW-1003">Cell membrane</keyword>
<keyword id="KW-0472">Membrane</keyword>
<keyword id="KW-0547">Nucleotide-binding</keyword>
<keyword id="KW-0677">Repeat</keyword>
<keyword id="KW-0762">Sugar transport</keyword>
<keyword id="KW-1278">Translocase</keyword>
<keyword id="KW-0813">Transport</keyword>
<evidence type="ECO:0000255" key="1">
    <source>
        <dbReference type="HAMAP-Rule" id="MF_01717"/>
    </source>
</evidence>
<evidence type="ECO:0000256" key="2">
    <source>
        <dbReference type="SAM" id="MobiDB-lite"/>
    </source>
</evidence>
<feature type="chain" id="PRO_0000262978" description="Putative ribose/galactose/methyl galactoside import ATP-binding protein 2">
    <location>
        <begin position="1"/>
        <end position="527"/>
    </location>
</feature>
<feature type="domain" description="ABC transporter 1" evidence="1">
    <location>
        <begin position="38"/>
        <end position="274"/>
    </location>
</feature>
<feature type="domain" description="ABC transporter 2" evidence="1">
    <location>
        <begin position="284"/>
        <end position="523"/>
    </location>
</feature>
<feature type="region of interest" description="Disordered" evidence="2">
    <location>
        <begin position="1"/>
        <end position="31"/>
    </location>
</feature>
<feature type="compositionally biased region" description="Low complexity" evidence="2">
    <location>
        <begin position="12"/>
        <end position="31"/>
    </location>
</feature>
<feature type="binding site" evidence="1">
    <location>
        <begin position="70"/>
        <end position="77"/>
    </location>
    <ligand>
        <name>ATP</name>
        <dbReference type="ChEBI" id="CHEBI:30616"/>
    </ligand>
</feature>
<accession>Q39HA1</accession>
<reference key="1">
    <citation type="submission" date="2005-10" db="EMBL/GenBank/DDBJ databases">
        <title>Complete sequence of chromosome 1 of Burkholderia sp. 383.</title>
        <authorList>
            <consortium name="US DOE Joint Genome Institute"/>
            <person name="Copeland A."/>
            <person name="Lucas S."/>
            <person name="Lapidus A."/>
            <person name="Barry K."/>
            <person name="Detter J.C."/>
            <person name="Glavina T."/>
            <person name="Hammon N."/>
            <person name="Israni S."/>
            <person name="Pitluck S."/>
            <person name="Chain P."/>
            <person name="Malfatti S."/>
            <person name="Shin M."/>
            <person name="Vergez L."/>
            <person name="Schmutz J."/>
            <person name="Larimer F."/>
            <person name="Land M."/>
            <person name="Kyrpides N."/>
            <person name="Lykidis A."/>
            <person name="Richardson P."/>
        </authorList>
    </citation>
    <scope>NUCLEOTIDE SEQUENCE [LARGE SCALE GENOMIC DNA]</scope>
    <source>
        <strain>ATCC 17760 / DSM 23089 / LMG 22485 / NCIMB 9086 / R18194 / 383</strain>
    </source>
</reference>
<name>RGMG2_BURL3</name>
<organism>
    <name type="scientific">Burkholderia lata (strain ATCC 17760 / DSM 23089 / LMG 22485 / NCIMB 9086 / R18194 / 383)</name>
    <dbReference type="NCBI Taxonomy" id="482957"/>
    <lineage>
        <taxon>Bacteria</taxon>
        <taxon>Pseudomonadati</taxon>
        <taxon>Pseudomonadota</taxon>
        <taxon>Betaproteobacteria</taxon>
        <taxon>Burkholderiales</taxon>
        <taxon>Burkholderiaceae</taxon>
        <taxon>Burkholderia</taxon>
        <taxon>Burkholderia cepacia complex</taxon>
    </lineage>
</organism>